<comment type="function">
    <text evidence="1">Essential cell division protein.</text>
</comment>
<comment type="subcellular location">
    <subcellularLocation>
        <location evidence="1">Cell membrane</location>
        <topology evidence="1">Single-pass type II membrane protein</topology>
    </subcellularLocation>
    <text evidence="1">Localizes to the division septum.</text>
</comment>
<comment type="similarity">
    <text evidence="4">Belongs to the FtsQ/DivIB family. FtsQ subfamily.</text>
</comment>
<keyword id="KW-0131">Cell cycle</keyword>
<keyword id="KW-0132">Cell division</keyword>
<keyword id="KW-1003">Cell membrane</keyword>
<keyword id="KW-0472">Membrane</keyword>
<keyword id="KW-0812">Transmembrane</keyword>
<keyword id="KW-1133">Transmembrane helix</keyword>
<protein>
    <recommendedName>
        <fullName>Cell division protein FtsQ</fullName>
    </recommendedName>
</protein>
<name>FTSQ_STRGR</name>
<dbReference type="EMBL" id="U07344">
    <property type="protein sequence ID" value="AAA56888.1"/>
    <property type="molecule type" value="Genomic_DNA"/>
</dbReference>
<dbReference type="SMR" id="P45503"/>
<dbReference type="GO" id="GO:0005886">
    <property type="term" value="C:plasma membrane"/>
    <property type="evidence" value="ECO:0007669"/>
    <property type="project" value="UniProtKB-SubCell"/>
</dbReference>
<dbReference type="GO" id="GO:0051301">
    <property type="term" value="P:cell division"/>
    <property type="evidence" value="ECO:0007669"/>
    <property type="project" value="UniProtKB-KW"/>
</dbReference>
<dbReference type="Gene3D" id="3.10.20.310">
    <property type="entry name" value="membrane protein fhac"/>
    <property type="match status" value="1"/>
</dbReference>
<dbReference type="InterPro" id="IPR005548">
    <property type="entry name" value="Cell_div_FtsQ/DivIB_C"/>
</dbReference>
<dbReference type="InterPro" id="IPR050487">
    <property type="entry name" value="FtsQ_DivIB"/>
</dbReference>
<dbReference type="InterPro" id="IPR034746">
    <property type="entry name" value="POTRA"/>
</dbReference>
<dbReference type="InterPro" id="IPR013685">
    <property type="entry name" value="POTRA_FtsQ_type"/>
</dbReference>
<dbReference type="PANTHER" id="PTHR37820">
    <property type="entry name" value="CELL DIVISION PROTEIN DIVIB"/>
    <property type="match status" value="1"/>
</dbReference>
<dbReference type="PANTHER" id="PTHR37820:SF1">
    <property type="entry name" value="CELL DIVISION PROTEIN FTSQ"/>
    <property type="match status" value="1"/>
</dbReference>
<dbReference type="Pfam" id="PF03799">
    <property type="entry name" value="FtsQ_DivIB_C"/>
    <property type="match status" value="1"/>
</dbReference>
<dbReference type="Pfam" id="PF08478">
    <property type="entry name" value="POTRA_1"/>
    <property type="match status" value="1"/>
</dbReference>
<dbReference type="PROSITE" id="PS51779">
    <property type="entry name" value="POTRA"/>
    <property type="match status" value="1"/>
</dbReference>
<proteinExistence type="inferred from homology"/>
<sequence>GSSWLRVEKVGTSGVEVLTREEVEAVAAVPVGAPLVSVDTDAMERRLRQKLPRIDTVDVVRSWPDGIGLKVTERKPVLLVEKGGAFVEVDAEGVRFATVDKAPKGVPLLELTPEPSASLRRFGGDGLLREAVRVAGDLPAGVARDTRVVRVASYDAISLRLTRDRVVTWGSGEDGAVKARVLAALMKAAPKAGQFDVSAPTAPAVSAS</sequence>
<accession>P45503</accession>
<reference key="1">
    <citation type="journal article" date="1994" name="Gene">
        <title>Expression of the division-controlling gene ftsZ during growth and sporulation of the filamentous bacterium Streptomyces griseus.</title>
        <authorList>
            <person name="Dharmatilake A.J."/>
            <person name="Kendrick K.E."/>
        </authorList>
    </citation>
    <scope>NUCLEOTIDE SEQUENCE [GENOMIC DNA]</scope>
    <source>
        <strain>ATCC 23345 / DSM 40236 / JCM 4644 / NBRC 12875 / NCIMB 13023 / NRRL B-2682 / VKM Ac-800 / IMRU 3463</strain>
    </source>
</reference>
<gene>
    <name type="primary">ftsQ</name>
</gene>
<evidence type="ECO:0000250" key="1"/>
<evidence type="ECO:0000255" key="2"/>
<evidence type="ECO:0000255" key="3">
    <source>
        <dbReference type="PROSITE-ProRule" id="PRU01115"/>
    </source>
</evidence>
<evidence type="ECO:0000305" key="4"/>
<feature type="chain" id="PRO_0000160588" description="Cell division protein FtsQ">
    <location>
        <begin position="1" status="less than"/>
        <end position="208"/>
    </location>
</feature>
<feature type="transmembrane region" description="Helical" evidence="2">
    <location>
        <begin position="23"/>
        <end position="39"/>
    </location>
</feature>
<feature type="domain" description="POTRA" evidence="3">
    <location>
        <begin position="5"/>
        <end position="74"/>
    </location>
</feature>
<feature type="non-terminal residue">
    <location>
        <position position="1"/>
    </location>
</feature>
<organism>
    <name type="scientific">Streptomyces griseus</name>
    <dbReference type="NCBI Taxonomy" id="1911"/>
    <lineage>
        <taxon>Bacteria</taxon>
        <taxon>Bacillati</taxon>
        <taxon>Actinomycetota</taxon>
        <taxon>Actinomycetes</taxon>
        <taxon>Kitasatosporales</taxon>
        <taxon>Streptomycetaceae</taxon>
        <taxon>Streptomyces</taxon>
    </lineage>
</organism>